<name>ATPA_PROM4</name>
<feature type="chain" id="PRO_1000143421" description="ATP synthase subunit alpha">
    <location>
        <begin position="1"/>
        <end position="504"/>
    </location>
</feature>
<feature type="binding site" evidence="1">
    <location>
        <begin position="170"/>
        <end position="177"/>
    </location>
    <ligand>
        <name>ATP</name>
        <dbReference type="ChEBI" id="CHEBI:30616"/>
    </ligand>
</feature>
<feature type="site" description="Required for activity" evidence="1">
    <location>
        <position position="363"/>
    </location>
</feature>
<keyword id="KW-0066">ATP synthesis</keyword>
<keyword id="KW-0067">ATP-binding</keyword>
<keyword id="KW-0139">CF(1)</keyword>
<keyword id="KW-0375">Hydrogen ion transport</keyword>
<keyword id="KW-0406">Ion transport</keyword>
<keyword id="KW-0472">Membrane</keyword>
<keyword id="KW-0547">Nucleotide-binding</keyword>
<keyword id="KW-1185">Reference proteome</keyword>
<keyword id="KW-0793">Thylakoid</keyword>
<keyword id="KW-1278">Translocase</keyword>
<keyword id="KW-0813">Transport</keyword>
<accession>A9BCD9</accession>
<proteinExistence type="inferred from homology"/>
<comment type="function">
    <text evidence="1">Produces ATP from ADP in the presence of a proton gradient across the membrane. The alpha chain is a regulatory subunit.</text>
</comment>
<comment type="catalytic activity">
    <reaction evidence="1">
        <text>ATP + H2O + 4 H(+)(in) = ADP + phosphate + 5 H(+)(out)</text>
        <dbReference type="Rhea" id="RHEA:57720"/>
        <dbReference type="ChEBI" id="CHEBI:15377"/>
        <dbReference type="ChEBI" id="CHEBI:15378"/>
        <dbReference type="ChEBI" id="CHEBI:30616"/>
        <dbReference type="ChEBI" id="CHEBI:43474"/>
        <dbReference type="ChEBI" id="CHEBI:456216"/>
        <dbReference type="EC" id="7.1.2.2"/>
    </reaction>
</comment>
<comment type="subunit">
    <text evidence="1">F-type ATPases have 2 components, CF(1) - the catalytic core - and CF(0) - the membrane proton channel. CF(1) has five subunits: alpha(3), beta(3), gamma(1), delta(1), epsilon(1). CF(0) has four main subunits: a, b, b' and c.</text>
</comment>
<comment type="subcellular location">
    <subcellularLocation>
        <location evidence="1">Cellular thylakoid membrane</location>
        <topology evidence="1">Peripheral membrane protein</topology>
    </subcellularLocation>
</comment>
<comment type="similarity">
    <text evidence="1">Belongs to the ATPase alpha/beta chains family.</text>
</comment>
<reference key="1">
    <citation type="journal article" date="2007" name="PLoS Genet.">
        <title>Patterns and implications of gene gain and loss in the evolution of Prochlorococcus.</title>
        <authorList>
            <person name="Kettler G.C."/>
            <person name="Martiny A.C."/>
            <person name="Huang K."/>
            <person name="Zucker J."/>
            <person name="Coleman M.L."/>
            <person name="Rodrigue S."/>
            <person name="Chen F."/>
            <person name="Lapidus A."/>
            <person name="Ferriera S."/>
            <person name="Johnson J."/>
            <person name="Steglich C."/>
            <person name="Church G.M."/>
            <person name="Richardson P."/>
            <person name="Chisholm S.W."/>
        </authorList>
    </citation>
    <scope>NUCLEOTIDE SEQUENCE [LARGE SCALE GENOMIC DNA]</scope>
    <source>
        <strain>MIT 9211</strain>
    </source>
</reference>
<dbReference type="EC" id="7.1.2.2" evidence="1"/>
<dbReference type="EMBL" id="CP000878">
    <property type="protein sequence ID" value="ABX09501.1"/>
    <property type="molecule type" value="Genomic_DNA"/>
</dbReference>
<dbReference type="RefSeq" id="WP_012196122.1">
    <property type="nucleotide sequence ID" value="NC_009976.1"/>
</dbReference>
<dbReference type="SMR" id="A9BCD9"/>
<dbReference type="STRING" id="93059.P9211_15701"/>
<dbReference type="KEGG" id="pmj:P9211_15701"/>
<dbReference type="eggNOG" id="COG0056">
    <property type="taxonomic scope" value="Bacteria"/>
</dbReference>
<dbReference type="HOGENOM" id="CLU_010091_2_1_3"/>
<dbReference type="OrthoDB" id="9803053at2"/>
<dbReference type="Proteomes" id="UP000000788">
    <property type="component" value="Chromosome"/>
</dbReference>
<dbReference type="GO" id="GO:0031676">
    <property type="term" value="C:plasma membrane-derived thylakoid membrane"/>
    <property type="evidence" value="ECO:0007669"/>
    <property type="project" value="UniProtKB-SubCell"/>
</dbReference>
<dbReference type="GO" id="GO:0045259">
    <property type="term" value="C:proton-transporting ATP synthase complex"/>
    <property type="evidence" value="ECO:0007669"/>
    <property type="project" value="UniProtKB-KW"/>
</dbReference>
<dbReference type="GO" id="GO:0043531">
    <property type="term" value="F:ADP binding"/>
    <property type="evidence" value="ECO:0007669"/>
    <property type="project" value="TreeGrafter"/>
</dbReference>
<dbReference type="GO" id="GO:0005524">
    <property type="term" value="F:ATP binding"/>
    <property type="evidence" value="ECO:0007669"/>
    <property type="project" value="UniProtKB-UniRule"/>
</dbReference>
<dbReference type="GO" id="GO:0046933">
    <property type="term" value="F:proton-transporting ATP synthase activity, rotational mechanism"/>
    <property type="evidence" value="ECO:0007669"/>
    <property type="project" value="UniProtKB-UniRule"/>
</dbReference>
<dbReference type="CDD" id="cd18113">
    <property type="entry name" value="ATP-synt_F1_alpha_C"/>
    <property type="match status" value="1"/>
</dbReference>
<dbReference type="CDD" id="cd18116">
    <property type="entry name" value="ATP-synt_F1_alpha_N"/>
    <property type="match status" value="1"/>
</dbReference>
<dbReference type="CDD" id="cd01132">
    <property type="entry name" value="F1-ATPase_alpha_CD"/>
    <property type="match status" value="1"/>
</dbReference>
<dbReference type="FunFam" id="1.20.150.20:FF:000001">
    <property type="entry name" value="ATP synthase subunit alpha"/>
    <property type="match status" value="1"/>
</dbReference>
<dbReference type="FunFam" id="2.40.30.20:FF:000001">
    <property type="entry name" value="ATP synthase subunit alpha"/>
    <property type="match status" value="1"/>
</dbReference>
<dbReference type="FunFam" id="3.40.50.300:FF:000002">
    <property type="entry name" value="ATP synthase subunit alpha"/>
    <property type="match status" value="1"/>
</dbReference>
<dbReference type="Gene3D" id="2.40.30.20">
    <property type="match status" value="1"/>
</dbReference>
<dbReference type="Gene3D" id="1.20.150.20">
    <property type="entry name" value="ATP synthase alpha/beta chain, C-terminal domain"/>
    <property type="match status" value="1"/>
</dbReference>
<dbReference type="Gene3D" id="3.40.50.300">
    <property type="entry name" value="P-loop containing nucleotide triphosphate hydrolases"/>
    <property type="match status" value="1"/>
</dbReference>
<dbReference type="HAMAP" id="MF_01346">
    <property type="entry name" value="ATP_synth_alpha_bact"/>
    <property type="match status" value="1"/>
</dbReference>
<dbReference type="InterPro" id="IPR023366">
    <property type="entry name" value="ATP_synth_asu-like_sf"/>
</dbReference>
<dbReference type="InterPro" id="IPR000793">
    <property type="entry name" value="ATP_synth_asu_C"/>
</dbReference>
<dbReference type="InterPro" id="IPR038376">
    <property type="entry name" value="ATP_synth_asu_C_sf"/>
</dbReference>
<dbReference type="InterPro" id="IPR033732">
    <property type="entry name" value="ATP_synth_F1_a_nt-bd_dom"/>
</dbReference>
<dbReference type="InterPro" id="IPR005294">
    <property type="entry name" value="ATP_synth_F1_asu"/>
</dbReference>
<dbReference type="InterPro" id="IPR020003">
    <property type="entry name" value="ATPase_a/bsu_AS"/>
</dbReference>
<dbReference type="InterPro" id="IPR004100">
    <property type="entry name" value="ATPase_F1/V1/A1_a/bsu_N"/>
</dbReference>
<dbReference type="InterPro" id="IPR036121">
    <property type="entry name" value="ATPase_F1/V1/A1_a/bsu_N_sf"/>
</dbReference>
<dbReference type="InterPro" id="IPR000194">
    <property type="entry name" value="ATPase_F1/V1/A1_a/bsu_nucl-bd"/>
</dbReference>
<dbReference type="InterPro" id="IPR027417">
    <property type="entry name" value="P-loop_NTPase"/>
</dbReference>
<dbReference type="NCBIfam" id="TIGR00962">
    <property type="entry name" value="atpA"/>
    <property type="match status" value="1"/>
</dbReference>
<dbReference type="NCBIfam" id="NF009884">
    <property type="entry name" value="PRK13343.1"/>
    <property type="match status" value="1"/>
</dbReference>
<dbReference type="PANTHER" id="PTHR48082">
    <property type="entry name" value="ATP SYNTHASE SUBUNIT ALPHA, MITOCHONDRIAL"/>
    <property type="match status" value="1"/>
</dbReference>
<dbReference type="PANTHER" id="PTHR48082:SF2">
    <property type="entry name" value="ATP SYNTHASE SUBUNIT ALPHA, MITOCHONDRIAL"/>
    <property type="match status" value="1"/>
</dbReference>
<dbReference type="Pfam" id="PF00006">
    <property type="entry name" value="ATP-synt_ab"/>
    <property type="match status" value="1"/>
</dbReference>
<dbReference type="Pfam" id="PF00306">
    <property type="entry name" value="ATP-synt_ab_C"/>
    <property type="match status" value="1"/>
</dbReference>
<dbReference type="Pfam" id="PF02874">
    <property type="entry name" value="ATP-synt_ab_N"/>
    <property type="match status" value="1"/>
</dbReference>
<dbReference type="PIRSF" id="PIRSF039088">
    <property type="entry name" value="F_ATPase_subunit_alpha"/>
    <property type="match status" value="1"/>
</dbReference>
<dbReference type="SUPFAM" id="SSF47917">
    <property type="entry name" value="C-terminal domain of alpha and beta subunits of F1 ATP synthase"/>
    <property type="match status" value="1"/>
</dbReference>
<dbReference type="SUPFAM" id="SSF50615">
    <property type="entry name" value="N-terminal domain of alpha and beta subunits of F1 ATP synthase"/>
    <property type="match status" value="1"/>
</dbReference>
<dbReference type="SUPFAM" id="SSF52540">
    <property type="entry name" value="P-loop containing nucleoside triphosphate hydrolases"/>
    <property type="match status" value="1"/>
</dbReference>
<dbReference type="PROSITE" id="PS00152">
    <property type="entry name" value="ATPASE_ALPHA_BETA"/>
    <property type="match status" value="1"/>
</dbReference>
<organism>
    <name type="scientific">Prochlorococcus marinus (strain MIT 9211)</name>
    <dbReference type="NCBI Taxonomy" id="93059"/>
    <lineage>
        <taxon>Bacteria</taxon>
        <taxon>Bacillati</taxon>
        <taxon>Cyanobacteriota</taxon>
        <taxon>Cyanophyceae</taxon>
        <taxon>Synechococcales</taxon>
        <taxon>Prochlorococcaceae</taxon>
        <taxon>Prochlorococcus</taxon>
    </lineage>
</organism>
<gene>
    <name evidence="1" type="primary">atpA</name>
    <name type="ordered locus">P9211_15701</name>
</gene>
<sequence length="504" mass="53929">MVSIRPDEISSILKQQIANYDKSVSVSNVGTVLQIGDGIARIYGLEKVMAGELVEFEDGTEGIALNLEDDNVGAVLMGEALGVQEGSTVKSTGKIASVPVGQAMLGRVVNPLGQPVDGNGDIATSDSRLIESLAPGIIKRKSVHEPMQTGITSIDAMIPIGRGQRELIIGDRQTGKTAIAIDTIINQKGQDVVCVYVAVGQKSASVAQVVEVLREKGALEYTIVVNASASEAAALQYLAPYTGAAIAEHFMYQGKATLVIYDDLTKQAQAYRQMSLLLRRPPGREAYPGDVFYCHSRLLERAAKLSESMGSGSMTALPIIETQAGDVSAYIPTNVISITDGQIFLSADLFNSGLRPAINVGISVSRVGGAAQTKAIKKIAGTLKLELAQFDELAAFSQFASDLDEATQKQLGRGKRLRELLKQAQFAPLNLAEQVAVVYAGVKGLIDEVPVEQVTQFAGELREYLKTSKPDYIKQVLTEKKLNEEIESVLKESINEVKSSMLAA</sequence>
<evidence type="ECO:0000255" key="1">
    <source>
        <dbReference type="HAMAP-Rule" id="MF_01346"/>
    </source>
</evidence>
<protein>
    <recommendedName>
        <fullName evidence="1">ATP synthase subunit alpha</fullName>
        <ecNumber evidence="1">7.1.2.2</ecNumber>
    </recommendedName>
    <alternativeName>
        <fullName evidence="1">ATP synthase F1 sector subunit alpha</fullName>
    </alternativeName>
    <alternativeName>
        <fullName evidence="1">F-ATPase subunit alpha</fullName>
    </alternativeName>
</protein>